<evidence type="ECO:0000255" key="1">
    <source>
        <dbReference type="HAMAP-Rule" id="MF_00818"/>
    </source>
</evidence>
<protein>
    <recommendedName>
        <fullName evidence="1">NADPH-dependent 7-cyano-7-deazaguanine reductase</fullName>
        <ecNumber evidence="1">1.7.1.13</ecNumber>
    </recommendedName>
    <alternativeName>
        <fullName evidence="1">7-cyano-7-carbaguanine reductase</fullName>
    </alternativeName>
    <alternativeName>
        <fullName evidence="1">NADPH-dependent nitrile oxidoreductase</fullName>
    </alternativeName>
    <alternativeName>
        <fullName evidence="1">PreQ(0) reductase</fullName>
    </alternativeName>
</protein>
<sequence>MAHGRQQDELQDITLLGNQDNTYNFDYRPDVLESFDNKHQGRDYFVKFNCPEFTSLCPITGQPDFATIYISYIPNVKMVESKSLKLYLFSFRNHGDFHEDCMNIIMNDLIELMDPHYIEVWGKFTPRGGISIDPYTNYGRPNSKYEKMAEHRLMNHDLYPEKIDNR</sequence>
<reference key="1">
    <citation type="submission" date="2007-05" db="EMBL/GenBank/DDBJ databases">
        <title>Complete sequence of chromosome of Staphylococcus aureus subsp. aureus JH9.</title>
        <authorList>
            <consortium name="US DOE Joint Genome Institute"/>
            <person name="Copeland A."/>
            <person name="Lucas S."/>
            <person name="Lapidus A."/>
            <person name="Barry K."/>
            <person name="Detter J.C."/>
            <person name="Glavina del Rio T."/>
            <person name="Hammon N."/>
            <person name="Israni S."/>
            <person name="Pitluck S."/>
            <person name="Chain P."/>
            <person name="Malfatti S."/>
            <person name="Shin M."/>
            <person name="Vergez L."/>
            <person name="Schmutz J."/>
            <person name="Larimer F."/>
            <person name="Land M."/>
            <person name="Hauser L."/>
            <person name="Kyrpides N."/>
            <person name="Kim E."/>
            <person name="Tomasz A."/>
            <person name="Richardson P."/>
        </authorList>
    </citation>
    <scope>NUCLEOTIDE SEQUENCE [LARGE SCALE GENOMIC DNA]</scope>
    <source>
        <strain>JH9</strain>
    </source>
</reference>
<organism>
    <name type="scientific">Staphylococcus aureus (strain JH9)</name>
    <dbReference type="NCBI Taxonomy" id="359786"/>
    <lineage>
        <taxon>Bacteria</taxon>
        <taxon>Bacillati</taxon>
        <taxon>Bacillota</taxon>
        <taxon>Bacilli</taxon>
        <taxon>Bacillales</taxon>
        <taxon>Staphylococcaceae</taxon>
        <taxon>Staphylococcus</taxon>
    </lineage>
</organism>
<gene>
    <name evidence="1" type="primary">queF</name>
    <name type="ordered locus">SaurJH9_0751</name>
</gene>
<dbReference type="EC" id="1.7.1.13" evidence="1"/>
<dbReference type="EMBL" id="CP000703">
    <property type="protein sequence ID" value="ABQ48554.1"/>
    <property type="molecule type" value="Genomic_DNA"/>
</dbReference>
<dbReference type="RefSeq" id="WP_000930014.1">
    <property type="nucleotide sequence ID" value="NC_009487.1"/>
</dbReference>
<dbReference type="SMR" id="A5IQT1"/>
<dbReference type="KEGG" id="saj:SaurJH9_0751"/>
<dbReference type="HOGENOM" id="CLU_102489_0_1_9"/>
<dbReference type="UniPathway" id="UPA00392"/>
<dbReference type="GO" id="GO:0005737">
    <property type="term" value="C:cytoplasm"/>
    <property type="evidence" value="ECO:0007669"/>
    <property type="project" value="UniProtKB-SubCell"/>
</dbReference>
<dbReference type="GO" id="GO:0033739">
    <property type="term" value="F:preQ1 synthase activity"/>
    <property type="evidence" value="ECO:0007669"/>
    <property type="project" value="UniProtKB-UniRule"/>
</dbReference>
<dbReference type="GO" id="GO:0008616">
    <property type="term" value="P:queuosine biosynthetic process"/>
    <property type="evidence" value="ECO:0007669"/>
    <property type="project" value="UniProtKB-UniRule"/>
</dbReference>
<dbReference type="GO" id="GO:0006400">
    <property type="term" value="P:tRNA modification"/>
    <property type="evidence" value="ECO:0007669"/>
    <property type="project" value="UniProtKB-UniRule"/>
</dbReference>
<dbReference type="Gene3D" id="3.30.1130.10">
    <property type="match status" value="1"/>
</dbReference>
<dbReference type="HAMAP" id="MF_00818">
    <property type="entry name" value="QueF_type1"/>
    <property type="match status" value="1"/>
</dbReference>
<dbReference type="InterPro" id="IPR043133">
    <property type="entry name" value="GTP-CH-I_C/QueF"/>
</dbReference>
<dbReference type="InterPro" id="IPR050084">
    <property type="entry name" value="NADPH_dep_7-cyano-7-deazaG_red"/>
</dbReference>
<dbReference type="InterPro" id="IPR029500">
    <property type="entry name" value="QueF"/>
</dbReference>
<dbReference type="InterPro" id="IPR016856">
    <property type="entry name" value="QueF_type1"/>
</dbReference>
<dbReference type="NCBIfam" id="TIGR03139">
    <property type="entry name" value="QueF-II"/>
    <property type="match status" value="1"/>
</dbReference>
<dbReference type="PANTHER" id="PTHR34354">
    <property type="entry name" value="NADPH-DEPENDENT 7-CYANO-7-DEAZAGUANINE REDUCTASE"/>
    <property type="match status" value="1"/>
</dbReference>
<dbReference type="PANTHER" id="PTHR34354:SF1">
    <property type="entry name" value="NADPH-DEPENDENT 7-CYANO-7-DEAZAGUANINE REDUCTASE"/>
    <property type="match status" value="1"/>
</dbReference>
<dbReference type="Pfam" id="PF14489">
    <property type="entry name" value="QueF"/>
    <property type="match status" value="1"/>
</dbReference>
<dbReference type="PIRSF" id="PIRSF027377">
    <property type="entry name" value="Nitrile_oxidored_QueF"/>
    <property type="match status" value="1"/>
</dbReference>
<dbReference type="SUPFAM" id="SSF55620">
    <property type="entry name" value="Tetrahydrobiopterin biosynthesis enzymes-like"/>
    <property type="match status" value="1"/>
</dbReference>
<comment type="function">
    <text evidence="1">Catalyzes the NADPH-dependent reduction of 7-cyano-7-deazaguanine (preQ0) to 7-aminomethyl-7-deazaguanine (preQ1).</text>
</comment>
<comment type="catalytic activity">
    <reaction evidence="1">
        <text>7-aminomethyl-7-carbaguanine + 2 NADP(+) = 7-cyano-7-deazaguanine + 2 NADPH + 3 H(+)</text>
        <dbReference type="Rhea" id="RHEA:13409"/>
        <dbReference type="ChEBI" id="CHEBI:15378"/>
        <dbReference type="ChEBI" id="CHEBI:45075"/>
        <dbReference type="ChEBI" id="CHEBI:57783"/>
        <dbReference type="ChEBI" id="CHEBI:58349"/>
        <dbReference type="ChEBI" id="CHEBI:58703"/>
        <dbReference type="EC" id="1.7.1.13"/>
    </reaction>
</comment>
<comment type="pathway">
    <text evidence="1">tRNA modification; tRNA-queuosine biosynthesis.</text>
</comment>
<comment type="subcellular location">
    <subcellularLocation>
        <location evidence="1">Cytoplasm</location>
    </subcellularLocation>
</comment>
<comment type="similarity">
    <text evidence="1">Belongs to the GTP cyclohydrolase I family. QueF type 1 subfamily.</text>
</comment>
<keyword id="KW-0963">Cytoplasm</keyword>
<keyword id="KW-0521">NADP</keyword>
<keyword id="KW-0560">Oxidoreductase</keyword>
<keyword id="KW-0671">Queuosine biosynthesis</keyword>
<name>QUEF_STAA9</name>
<feature type="chain" id="PRO_1000083840" description="NADPH-dependent 7-cyano-7-deazaguanine reductase">
    <location>
        <begin position="1"/>
        <end position="166"/>
    </location>
</feature>
<feature type="active site" description="Thioimide intermediate" evidence="1">
    <location>
        <position position="57"/>
    </location>
</feature>
<feature type="active site" description="Proton donor" evidence="1">
    <location>
        <position position="64"/>
    </location>
</feature>
<feature type="binding site" evidence="1">
    <location>
        <begin position="79"/>
        <end position="81"/>
    </location>
    <ligand>
        <name>substrate</name>
    </ligand>
</feature>
<feature type="binding site" evidence="1">
    <location>
        <begin position="98"/>
        <end position="99"/>
    </location>
    <ligand>
        <name>substrate</name>
    </ligand>
</feature>
<accession>A5IQT1</accession>
<proteinExistence type="inferred from homology"/>